<sequence length="62" mass="6967">MAKKLEITLTRSLIGRPQDQRVTVNTLGLRKMHQTVVQEDNAAIRGMVNKVSHLVTVKEIEA</sequence>
<reference key="1">
    <citation type="journal article" date="1999" name="Biosci. Biotechnol. Biochem.">
        <title>Sequence analysis of a 32-kb region including the major ribosomal protein gene clusters from alkaliphilic Bacillus sp. strain C-125.</title>
        <authorList>
            <person name="Takami H."/>
            <person name="Takaki Y."/>
            <person name="Nakasone K."/>
            <person name="Hirama C."/>
            <person name="Inoue A."/>
            <person name="Horikoshi K."/>
        </authorList>
    </citation>
    <scope>NUCLEOTIDE SEQUENCE [GENOMIC DNA]</scope>
    <source>
        <strain>ATCC BAA-125 / DSM 18197 / FERM 7344 / JCM 9153 / C-125</strain>
    </source>
</reference>
<reference key="2">
    <citation type="journal article" date="2000" name="Nucleic Acids Res.">
        <title>Complete genome sequence of the alkaliphilic bacterium Bacillus halodurans and genomic sequence comparison with Bacillus subtilis.</title>
        <authorList>
            <person name="Takami H."/>
            <person name="Nakasone K."/>
            <person name="Takaki Y."/>
            <person name="Maeno G."/>
            <person name="Sasaki R."/>
            <person name="Masui N."/>
            <person name="Fuji F."/>
            <person name="Hirama C."/>
            <person name="Nakamura Y."/>
            <person name="Ogasawara N."/>
            <person name="Kuhara S."/>
            <person name="Horikoshi K."/>
        </authorList>
    </citation>
    <scope>NUCLEOTIDE SEQUENCE [LARGE SCALE GENOMIC DNA]</scope>
    <source>
        <strain>ATCC BAA-125 / DSM 18197 / FERM 7344 / JCM 9153 / C-125</strain>
    </source>
</reference>
<feature type="chain" id="PRO_0000104581" description="Large ribosomal subunit protein uL30">
    <location>
        <begin position="1"/>
        <end position="62"/>
    </location>
</feature>
<dbReference type="EMBL" id="AB017508">
    <property type="protein sequence ID" value="BAA75289.1"/>
    <property type="molecule type" value="Genomic_DNA"/>
</dbReference>
<dbReference type="EMBL" id="BA000004">
    <property type="protein sequence ID" value="BAB03871.1"/>
    <property type="molecule type" value="Genomic_DNA"/>
</dbReference>
<dbReference type="PIR" id="T44401">
    <property type="entry name" value="T44401"/>
</dbReference>
<dbReference type="RefSeq" id="WP_010896335.1">
    <property type="nucleotide sequence ID" value="NC_002570.2"/>
</dbReference>
<dbReference type="SMR" id="Q9Z9J6"/>
<dbReference type="STRING" id="272558.gene:10725992"/>
<dbReference type="GeneID" id="87595693"/>
<dbReference type="KEGG" id="bha:BH0152"/>
<dbReference type="eggNOG" id="COG1841">
    <property type="taxonomic scope" value="Bacteria"/>
</dbReference>
<dbReference type="HOGENOM" id="CLU_131047_2_1_9"/>
<dbReference type="OrthoDB" id="9812790at2"/>
<dbReference type="Proteomes" id="UP000001258">
    <property type="component" value="Chromosome"/>
</dbReference>
<dbReference type="GO" id="GO:0022625">
    <property type="term" value="C:cytosolic large ribosomal subunit"/>
    <property type="evidence" value="ECO:0007669"/>
    <property type="project" value="TreeGrafter"/>
</dbReference>
<dbReference type="GO" id="GO:0003735">
    <property type="term" value="F:structural constituent of ribosome"/>
    <property type="evidence" value="ECO:0007669"/>
    <property type="project" value="InterPro"/>
</dbReference>
<dbReference type="GO" id="GO:0006412">
    <property type="term" value="P:translation"/>
    <property type="evidence" value="ECO:0007669"/>
    <property type="project" value="UniProtKB-UniRule"/>
</dbReference>
<dbReference type="CDD" id="cd01658">
    <property type="entry name" value="Ribosomal_L30"/>
    <property type="match status" value="1"/>
</dbReference>
<dbReference type="FunFam" id="3.30.1390.20:FF:000001">
    <property type="entry name" value="50S ribosomal protein L30"/>
    <property type="match status" value="1"/>
</dbReference>
<dbReference type="Gene3D" id="3.30.1390.20">
    <property type="entry name" value="Ribosomal protein L30, ferredoxin-like fold domain"/>
    <property type="match status" value="1"/>
</dbReference>
<dbReference type="HAMAP" id="MF_01371_B">
    <property type="entry name" value="Ribosomal_uL30_B"/>
    <property type="match status" value="1"/>
</dbReference>
<dbReference type="InterPro" id="IPR036919">
    <property type="entry name" value="Ribo_uL30_ferredoxin-like_sf"/>
</dbReference>
<dbReference type="InterPro" id="IPR005996">
    <property type="entry name" value="Ribosomal_uL30_bac-type"/>
</dbReference>
<dbReference type="InterPro" id="IPR018038">
    <property type="entry name" value="Ribosomal_uL30_CS"/>
</dbReference>
<dbReference type="InterPro" id="IPR016082">
    <property type="entry name" value="Ribosomal_uL30_ferredoxin-like"/>
</dbReference>
<dbReference type="NCBIfam" id="TIGR01308">
    <property type="entry name" value="rpmD_bact"/>
    <property type="match status" value="1"/>
</dbReference>
<dbReference type="PANTHER" id="PTHR15892:SF2">
    <property type="entry name" value="LARGE RIBOSOMAL SUBUNIT PROTEIN UL30M"/>
    <property type="match status" value="1"/>
</dbReference>
<dbReference type="PANTHER" id="PTHR15892">
    <property type="entry name" value="MITOCHONDRIAL RIBOSOMAL PROTEIN L30"/>
    <property type="match status" value="1"/>
</dbReference>
<dbReference type="Pfam" id="PF00327">
    <property type="entry name" value="Ribosomal_L30"/>
    <property type="match status" value="1"/>
</dbReference>
<dbReference type="PIRSF" id="PIRSF002211">
    <property type="entry name" value="Ribosomal_L30_bac-type"/>
    <property type="match status" value="1"/>
</dbReference>
<dbReference type="SUPFAM" id="SSF55129">
    <property type="entry name" value="Ribosomal protein L30p/L7e"/>
    <property type="match status" value="1"/>
</dbReference>
<dbReference type="PROSITE" id="PS00634">
    <property type="entry name" value="RIBOSOMAL_L30"/>
    <property type="match status" value="1"/>
</dbReference>
<organism>
    <name type="scientific">Halalkalibacterium halodurans (strain ATCC BAA-125 / DSM 18197 / FERM 7344 / JCM 9153 / C-125)</name>
    <name type="common">Bacillus halodurans</name>
    <dbReference type="NCBI Taxonomy" id="272558"/>
    <lineage>
        <taxon>Bacteria</taxon>
        <taxon>Bacillati</taxon>
        <taxon>Bacillota</taxon>
        <taxon>Bacilli</taxon>
        <taxon>Bacillales</taxon>
        <taxon>Bacillaceae</taxon>
        <taxon>Halalkalibacterium (ex Joshi et al. 2022)</taxon>
    </lineage>
</organism>
<gene>
    <name evidence="1" type="primary">rpmD</name>
    <name type="ordered locus">BH0152</name>
</gene>
<proteinExistence type="inferred from homology"/>
<evidence type="ECO:0000255" key="1">
    <source>
        <dbReference type="HAMAP-Rule" id="MF_01371"/>
    </source>
</evidence>
<evidence type="ECO:0000305" key="2"/>
<comment type="subunit">
    <text evidence="1">Part of the 50S ribosomal subunit.</text>
</comment>
<comment type="similarity">
    <text evidence="1">Belongs to the universal ribosomal protein uL30 family.</text>
</comment>
<keyword id="KW-1185">Reference proteome</keyword>
<keyword id="KW-0687">Ribonucleoprotein</keyword>
<keyword id="KW-0689">Ribosomal protein</keyword>
<name>RL30_HALH5</name>
<protein>
    <recommendedName>
        <fullName evidence="1">Large ribosomal subunit protein uL30</fullName>
    </recommendedName>
    <alternativeName>
        <fullName evidence="2">50S ribosomal protein L30</fullName>
    </alternativeName>
</protein>
<accession>Q9Z9J6</accession>
<accession>Q9JPW9</accession>